<evidence type="ECO:0000255" key="1">
    <source>
        <dbReference type="HAMAP-Rule" id="MF_00129"/>
    </source>
</evidence>
<proteinExistence type="inferred from homology"/>
<name>MNMG_PSET1</name>
<organism>
    <name type="scientific">Pseudoalteromonas translucida (strain TAC 125)</name>
    <dbReference type="NCBI Taxonomy" id="326442"/>
    <lineage>
        <taxon>Bacteria</taxon>
        <taxon>Pseudomonadati</taxon>
        <taxon>Pseudomonadota</taxon>
        <taxon>Gammaproteobacteria</taxon>
        <taxon>Alteromonadales</taxon>
        <taxon>Pseudoalteromonadaceae</taxon>
        <taxon>Pseudoalteromonas</taxon>
    </lineage>
</organism>
<dbReference type="EMBL" id="CR954246">
    <property type="protein sequence ID" value="CAI88048.1"/>
    <property type="molecule type" value="Genomic_DNA"/>
</dbReference>
<dbReference type="SMR" id="Q3IK39"/>
<dbReference type="STRING" id="326442.PSHAa3019"/>
<dbReference type="KEGG" id="pha:PSHAa3019"/>
<dbReference type="PATRIC" id="fig|326442.8.peg.2909"/>
<dbReference type="eggNOG" id="COG0445">
    <property type="taxonomic scope" value="Bacteria"/>
</dbReference>
<dbReference type="HOGENOM" id="CLU_007831_2_2_6"/>
<dbReference type="BioCyc" id="PHAL326442:PSHA_RS14815-MONOMER"/>
<dbReference type="Proteomes" id="UP000006843">
    <property type="component" value="Chromosome I"/>
</dbReference>
<dbReference type="GO" id="GO:0005829">
    <property type="term" value="C:cytosol"/>
    <property type="evidence" value="ECO:0007669"/>
    <property type="project" value="TreeGrafter"/>
</dbReference>
<dbReference type="GO" id="GO:0050660">
    <property type="term" value="F:flavin adenine dinucleotide binding"/>
    <property type="evidence" value="ECO:0007669"/>
    <property type="project" value="UniProtKB-UniRule"/>
</dbReference>
<dbReference type="GO" id="GO:0030488">
    <property type="term" value="P:tRNA methylation"/>
    <property type="evidence" value="ECO:0007669"/>
    <property type="project" value="TreeGrafter"/>
</dbReference>
<dbReference type="GO" id="GO:0002098">
    <property type="term" value="P:tRNA wobble uridine modification"/>
    <property type="evidence" value="ECO:0007669"/>
    <property type="project" value="InterPro"/>
</dbReference>
<dbReference type="FunFam" id="1.10.10.1800:FF:000001">
    <property type="entry name" value="tRNA uridine 5-carboxymethylaminomethyl modification enzyme MnmG"/>
    <property type="match status" value="1"/>
</dbReference>
<dbReference type="FunFam" id="1.10.150.570:FF:000001">
    <property type="entry name" value="tRNA uridine 5-carboxymethylaminomethyl modification enzyme MnmG"/>
    <property type="match status" value="1"/>
</dbReference>
<dbReference type="FunFam" id="3.50.50.60:FF:000002">
    <property type="entry name" value="tRNA uridine 5-carboxymethylaminomethyl modification enzyme MnmG"/>
    <property type="match status" value="1"/>
</dbReference>
<dbReference type="FunFam" id="3.50.50.60:FF:000010">
    <property type="entry name" value="tRNA uridine 5-carboxymethylaminomethyl modification enzyme MnmG"/>
    <property type="match status" value="1"/>
</dbReference>
<dbReference type="Gene3D" id="3.50.50.60">
    <property type="entry name" value="FAD/NAD(P)-binding domain"/>
    <property type="match status" value="2"/>
</dbReference>
<dbReference type="Gene3D" id="1.10.150.570">
    <property type="entry name" value="GidA associated domain, C-terminal subdomain"/>
    <property type="match status" value="1"/>
</dbReference>
<dbReference type="Gene3D" id="1.10.10.1800">
    <property type="entry name" value="tRNA uridine 5-carboxymethylaminomethyl modification enzyme MnmG/GidA"/>
    <property type="match status" value="1"/>
</dbReference>
<dbReference type="HAMAP" id="MF_00129">
    <property type="entry name" value="MnmG_GidA"/>
    <property type="match status" value="1"/>
</dbReference>
<dbReference type="InterPro" id="IPR036188">
    <property type="entry name" value="FAD/NAD-bd_sf"/>
</dbReference>
<dbReference type="InterPro" id="IPR049312">
    <property type="entry name" value="GIDA_C_N"/>
</dbReference>
<dbReference type="InterPro" id="IPR004416">
    <property type="entry name" value="MnmG"/>
</dbReference>
<dbReference type="InterPro" id="IPR002218">
    <property type="entry name" value="MnmG-rel"/>
</dbReference>
<dbReference type="InterPro" id="IPR020595">
    <property type="entry name" value="MnmG-rel_CS"/>
</dbReference>
<dbReference type="InterPro" id="IPR026904">
    <property type="entry name" value="MnmG_C"/>
</dbReference>
<dbReference type="InterPro" id="IPR047001">
    <property type="entry name" value="MnmG_C_subdom"/>
</dbReference>
<dbReference type="InterPro" id="IPR044920">
    <property type="entry name" value="MnmG_C_subdom_sf"/>
</dbReference>
<dbReference type="InterPro" id="IPR040131">
    <property type="entry name" value="MnmG_N"/>
</dbReference>
<dbReference type="NCBIfam" id="TIGR00136">
    <property type="entry name" value="mnmG_gidA"/>
    <property type="match status" value="1"/>
</dbReference>
<dbReference type="PANTHER" id="PTHR11806">
    <property type="entry name" value="GLUCOSE INHIBITED DIVISION PROTEIN A"/>
    <property type="match status" value="1"/>
</dbReference>
<dbReference type="PANTHER" id="PTHR11806:SF0">
    <property type="entry name" value="PROTEIN MTO1 HOMOLOG, MITOCHONDRIAL"/>
    <property type="match status" value="1"/>
</dbReference>
<dbReference type="Pfam" id="PF01134">
    <property type="entry name" value="GIDA"/>
    <property type="match status" value="1"/>
</dbReference>
<dbReference type="Pfam" id="PF21680">
    <property type="entry name" value="GIDA_C_1st"/>
    <property type="match status" value="1"/>
</dbReference>
<dbReference type="Pfam" id="PF13932">
    <property type="entry name" value="SAM_GIDA_C"/>
    <property type="match status" value="1"/>
</dbReference>
<dbReference type="SMART" id="SM01228">
    <property type="entry name" value="GIDA_assoc_3"/>
    <property type="match status" value="1"/>
</dbReference>
<dbReference type="SUPFAM" id="SSF51905">
    <property type="entry name" value="FAD/NAD(P)-binding domain"/>
    <property type="match status" value="1"/>
</dbReference>
<dbReference type="PROSITE" id="PS01280">
    <property type="entry name" value="GIDA_1"/>
    <property type="match status" value="1"/>
</dbReference>
<dbReference type="PROSITE" id="PS01281">
    <property type="entry name" value="GIDA_2"/>
    <property type="match status" value="1"/>
</dbReference>
<reference key="1">
    <citation type="journal article" date="2005" name="Genome Res.">
        <title>Coping with cold: the genome of the versatile marine Antarctica bacterium Pseudoalteromonas haloplanktis TAC125.</title>
        <authorList>
            <person name="Medigue C."/>
            <person name="Krin E."/>
            <person name="Pascal G."/>
            <person name="Barbe V."/>
            <person name="Bernsel A."/>
            <person name="Bertin P.N."/>
            <person name="Cheung F."/>
            <person name="Cruveiller S."/>
            <person name="D'Amico S."/>
            <person name="Duilio A."/>
            <person name="Fang G."/>
            <person name="Feller G."/>
            <person name="Ho C."/>
            <person name="Mangenot S."/>
            <person name="Marino G."/>
            <person name="Nilsson J."/>
            <person name="Parrilli E."/>
            <person name="Rocha E.P.C."/>
            <person name="Rouy Z."/>
            <person name="Sekowska A."/>
            <person name="Tutino M.L."/>
            <person name="Vallenet D."/>
            <person name="von Heijne G."/>
            <person name="Danchin A."/>
        </authorList>
    </citation>
    <scope>NUCLEOTIDE SEQUENCE [LARGE SCALE GENOMIC DNA]</scope>
    <source>
        <strain>TAC 125</strain>
    </source>
</reference>
<accession>Q3IK39</accession>
<sequence>MIFHENFDVIVVGGGHAGTEAALAAARMGMNTLLLTHNMDTLGQMSCNPAIGGIGKGHLVKEIDALGGAMAQAIDKGGIQFRTLNSSKGPAVRATRAQADRALYKAAIQTTLQNQDNLKIFQQSCDDLIVENDRVTGVVTQMGLRFSAPSVVLTVGTFLGGQIHIGLENFKGGRAGDPPSIALADRLRELPFRVDRLKTGTPPRIDARTVDFSKMQEQAGDTPIPVFSFMGKPSDHPQQIPCYITFTNEKTHDVIRKNLHRSPMYGGVIEGIGPRYCPSIEDKIVRFADKDKHQIFVEPEGLTSYELYPNGISTSLPFDVQIEIVQSITGFENAHICRPGYAIEYDFFDPRDLKRSLETKFIDGLFFAGQINGTTGYEEAGAQGLIAGMNAALKVQGKESWTPRRDEAYVGVLIDDLTTLGTKEPYRMFTSRAEYRLLLREDNADIRLTEKGRELGLVNDERWQAYNEKMEVIAKEKQRIKDTWIHKDHTMIDQVNALLKTPLTREASLEELLRRPEIRYNDLMAIDGLGSEFTNQAALEQVEIHTKYAGYIVRQQDEINKQLRHEQTILPKEFDYKTVSGLSNEVVAKLIDARPDTIGQASRISGITPAAISLLLVYLKKQGLLRKSA</sequence>
<keyword id="KW-0963">Cytoplasm</keyword>
<keyword id="KW-0274">FAD</keyword>
<keyword id="KW-0285">Flavoprotein</keyword>
<keyword id="KW-0520">NAD</keyword>
<keyword id="KW-1185">Reference proteome</keyword>
<keyword id="KW-0819">tRNA processing</keyword>
<feature type="chain" id="PRO_1000016646" description="tRNA uridine 5-carboxymethylaminomethyl modification enzyme MnmG">
    <location>
        <begin position="1"/>
        <end position="629"/>
    </location>
</feature>
<feature type="binding site" evidence="1">
    <location>
        <begin position="13"/>
        <end position="18"/>
    </location>
    <ligand>
        <name>FAD</name>
        <dbReference type="ChEBI" id="CHEBI:57692"/>
    </ligand>
</feature>
<feature type="binding site" evidence="1">
    <location>
        <begin position="273"/>
        <end position="287"/>
    </location>
    <ligand>
        <name>NAD(+)</name>
        <dbReference type="ChEBI" id="CHEBI:57540"/>
    </ligand>
</feature>
<protein>
    <recommendedName>
        <fullName evidence="1">tRNA uridine 5-carboxymethylaminomethyl modification enzyme MnmG</fullName>
    </recommendedName>
    <alternativeName>
        <fullName evidence="1">Glucose-inhibited division protein A</fullName>
    </alternativeName>
</protein>
<comment type="function">
    <text evidence="1">NAD-binding protein involved in the addition of a carboxymethylaminomethyl (cmnm) group at the wobble position (U34) of certain tRNAs, forming tRNA-cmnm(5)s(2)U34.</text>
</comment>
<comment type="cofactor">
    <cofactor evidence="1">
        <name>FAD</name>
        <dbReference type="ChEBI" id="CHEBI:57692"/>
    </cofactor>
</comment>
<comment type="subunit">
    <text evidence="1">Homodimer. Heterotetramer of two MnmE and two MnmG subunits.</text>
</comment>
<comment type="subcellular location">
    <subcellularLocation>
        <location evidence="1">Cytoplasm</location>
    </subcellularLocation>
</comment>
<comment type="similarity">
    <text evidence="1">Belongs to the MnmG family.</text>
</comment>
<gene>
    <name evidence="1" type="primary">mnmG</name>
    <name evidence="1" type="synonym">gidA</name>
    <name type="ordered locus">PSHAa3019</name>
</gene>